<name>HEM3_COXBN</name>
<keyword id="KW-0627">Porphyrin biosynthesis</keyword>
<keyword id="KW-0808">Transferase</keyword>
<organism>
    <name type="scientific">Coxiella burnetii (strain Dugway 5J108-111)</name>
    <dbReference type="NCBI Taxonomy" id="434922"/>
    <lineage>
        <taxon>Bacteria</taxon>
        <taxon>Pseudomonadati</taxon>
        <taxon>Pseudomonadota</taxon>
        <taxon>Gammaproteobacteria</taxon>
        <taxon>Legionellales</taxon>
        <taxon>Coxiellaceae</taxon>
        <taxon>Coxiella</taxon>
    </lineage>
</organism>
<feature type="chain" id="PRO_1000078606" description="Porphobilinogen deaminase">
    <location>
        <begin position="1"/>
        <end position="307"/>
    </location>
</feature>
<feature type="modified residue" description="S-(dipyrrolylmethanemethyl)cysteine" evidence="1">
    <location>
        <position position="241"/>
    </location>
</feature>
<gene>
    <name evidence="1" type="primary">hemC</name>
    <name type="ordered locus">CBUD_2170</name>
</gene>
<proteinExistence type="inferred from homology"/>
<evidence type="ECO:0000255" key="1">
    <source>
        <dbReference type="HAMAP-Rule" id="MF_00260"/>
    </source>
</evidence>
<sequence length="307" mass="33927">MIKKRSILIVTRKSPLALWQAEFVKQQIENSHPHLACQILGCTTQGDRLTTEKLVDSGGKDLFVKDLQKALLNRDADIAVHSIKDMSACDGPELMVGAFIRREDPRDVLIVKGELSTLPPHAVIGTSSPRRQCQLKKFQPGCKIKEIRGNVGTRLAKLDAGHYEAIVLAAAGLKRLGLENRIHYYFDPHEFIPAIGQGAIGVECRSDDHEMQTLLKSLDHRETRLCVTAERAVNEKLGGDCFTPIAAHAIIKNDQLSLFAMLGKIDGRVIIRATEIGNSEEAQRIGFKVASQLLEQGGDSLLRELKQ</sequence>
<comment type="function">
    <text evidence="1">Tetrapolymerization of the monopyrrole PBG into the hydroxymethylbilane pre-uroporphyrinogen in several discrete steps.</text>
</comment>
<comment type="catalytic activity">
    <reaction evidence="1">
        <text>4 porphobilinogen + H2O = hydroxymethylbilane + 4 NH4(+)</text>
        <dbReference type="Rhea" id="RHEA:13185"/>
        <dbReference type="ChEBI" id="CHEBI:15377"/>
        <dbReference type="ChEBI" id="CHEBI:28938"/>
        <dbReference type="ChEBI" id="CHEBI:57845"/>
        <dbReference type="ChEBI" id="CHEBI:58126"/>
        <dbReference type="EC" id="2.5.1.61"/>
    </reaction>
</comment>
<comment type="cofactor">
    <cofactor evidence="1">
        <name>dipyrromethane</name>
        <dbReference type="ChEBI" id="CHEBI:60342"/>
    </cofactor>
    <text evidence="1">Binds 1 dipyrromethane group covalently.</text>
</comment>
<comment type="pathway">
    <text evidence="1">Porphyrin-containing compound metabolism; protoporphyrin-IX biosynthesis; coproporphyrinogen-III from 5-aminolevulinate: step 2/4.</text>
</comment>
<comment type="subunit">
    <text evidence="1">Monomer.</text>
</comment>
<comment type="miscellaneous">
    <text evidence="1">The porphobilinogen subunits are added to the dipyrromethane group.</text>
</comment>
<comment type="similarity">
    <text evidence="1">Belongs to the HMBS family.</text>
</comment>
<protein>
    <recommendedName>
        <fullName evidence="1">Porphobilinogen deaminase</fullName>
        <shortName evidence="1">PBG</shortName>
        <ecNumber evidence="1">2.5.1.61</ecNumber>
    </recommendedName>
    <alternativeName>
        <fullName evidence="1">Hydroxymethylbilane synthase</fullName>
        <shortName evidence="1">HMBS</shortName>
    </alternativeName>
    <alternativeName>
        <fullName evidence="1">Pre-uroporphyrinogen synthase</fullName>
    </alternativeName>
</protein>
<accession>A9KDC4</accession>
<reference key="1">
    <citation type="journal article" date="2009" name="Infect. Immun.">
        <title>Comparative genomics reveal extensive transposon-mediated genomic plasticity and diversity among potential effector proteins within the genus Coxiella.</title>
        <authorList>
            <person name="Beare P.A."/>
            <person name="Unsworth N."/>
            <person name="Andoh M."/>
            <person name="Voth D.E."/>
            <person name="Omsland A."/>
            <person name="Gilk S.D."/>
            <person name="Williams K.P."/>
            <person name="Sobral B.W."/>
            <person name="Kupko J.J. III"/>
            <person name="Porcella S.F."/>
            <person name="Samuel J.E."/>
            <person name="Heinzen R.A."/>
        </authorList>
    </citation>
    <scope>NUCLEOTIDE SEQUENCE [LARGE SCALE GENOMIC DNA]</scope>
    <source>
        <strain>Dugway 5J108-111</strain>
    </source>
</reference>
<dbReference type="EC" id="2.5.1.61" evidence="1"/>
<dbReference type="EMBL" id="CP000733">
    <property type="protein sequence ID" value="ABS78430.1"/>
    <property type="molecule type" value="Genomic_DNA"/>
</dbReference>
<dbReference type="RefSeq" id="WP_005769883.1">
    <property type="nucleotide sequence ID" value="NC_009727.1"/>
</dbReference>
<dbReference type="SMR" id="A9KDC4"/>
<dbReference type="KEGG" id="cbd:CBUD_2170"/>
<dbReference type="HOGENOM" id="CLU_019704_1_0_6"/>
<dbReference type="UniPathway" id="UPA00251">
    <property type="reaction ID" value="UER00319"/>
</dbReference>
<dbReference type="Proteomes" id="UP000008555">
    <property type="component" value="Chromosome"/>
</dbReference>
<dbReference type="GO" id="GO:0005737">
    <property type="term" value="C:cytoplasm"/>
    <property type="evidence" value="ECO:0007669"/>
    <property type="project" value="TreeGrafter"/>
</dbReference>
<dbReference type="GO" id="GO:0004418">
    <property type="term" value="F:hydroxymethylbilane synthase activity"/>
    <property type="evidence" value="ECO:0007669"/>
    <property type="project" value="UniProtKB-UniRule"/>
</dbReference>
<dbReference type="GO" id="GO:0006782">
    <property type="term" value="P:protoporphyrinogen IX biosynthetic process"/>
    <property type="evidence" value="ECO:0007669"/>
    <property type="project" value="UniProtKB-UniRule"/>
</dbReference>
<dbReference type="FunFam" id="3.40.190.10:FF:000005">
    <property type="entry name" value="Porphobilinogen deaminase"/>
    <property type="match status" value="1"/>
</dbReference>
<dbReference type="FunFam" id="3.40.190.10:FF:000086">
    <property type="entry name" value="Probable porphobilinogen deaminase"/>
    <property type="match status" value="1"/>
</dbReference>
<dbReference type="Gene3D" id="3.40.190.10">
    <property type="entry name" value="Periplasmic binding protein-like II"/>
    <property type="match status" value="2"/>
</dbReference>
<dbReference type="Gene3D" id="3.30.160.40">
    <property type="entry name" value="Porphobilinogen deaminase, C-terminal domain"/>
    <property type="match status" value="1"/>
</dbReference>
<dbReference type="HAMAP" id="MF_00260">
    <property type="entry name" value="Porphobil_deam"/>
    <property type="match status" value="1"/>
</dbReference>
<dbReference type="InterPro" id="IPR000860">
    <property type="entry name" value="HemC"/>
</dbReference>
<dbReference type="InterPro" id="IPR022419">
    <property type="entry name" value="Porphobilin_deaminase_cofac_BS"/>
</dbReference>
<dbReference type="InterPro" id="IPR022417">
    <property type="entry name" value="Porphobilin_deaminase_N"/>
</dbReference>
<dbReference type="InterPro" id="IPR022418">
    <property type="entry name" value="Porphobilinogen_deaminase_C"/>
</dbReference>
<dbReference type="InterPro" id="IPR036803">
    <property type="entry name" value="Porphobilinogen_deaminase_C_sf"/>
</dbReference>
<dbReference type="NCBIfam" id="TIGR00212">
    <property type="entry name" value="hemC"/>
    <property type="match status" value="1"/>
</dbReference>
<dbReference type="PANTHER" id="PTHR11557">
    <property type="entry name" value="PORPHOBILINOGEN DEAMINASE"/>
    <property type="match status" value="1"/>
</dbReference>
<dbReference type="PANTHER" id="PTHR11557:SF0">
    <property type="entry name" value="PORPHOBILINOGEN DEAMINASE"/>
    <property type="match status" value="1"/>
</dbReference>
<dbReference type="Pfam" id="PF01379">
    <property type="entry name" value="Porphobil_deam"/>
    <property type="match status" value="1"/>
</dbReference>
<dbReference type="Pfam" id="PF03900">
    <property type="entry name" value="Porphobil_deamC"/>
    <property type="match status" value="1"/>
</dbReference>
<dbReference type="PIRSF" id="PIRSF001438">
    <property type="entry name" value="4pyrrol_synth_OHMeBilane_synth"/>
    <property type="match status" value="1"/>
</dbReference>
<dbReference type="PRINTS" id="PR00151">
    <property type="entry name" value="PORPHBDMNASE"/>
</dbReference>
<dbReference type="SUPFAM" id="SSF53850">
    <property type="entry name" value="Periplasmic binding protein-like II"/>
    <property type="match status" value="1"/>
</dbReference>
<dbReference type="SUPFAM" id="SSF54782">
    <property type="entry name" value="Porphobilinogen deaminase (hydroxymethylbilane synthase), C-terminal domain"/>
    <property type="match status" value="1"/>
</dbReference>
<dbReference type="PROSITE" id="PS00533">
    <property type="entry name" value="PORPHOBILINOGEN_DEAM"/>
    <property type="match status" value="1"/>
</dbReference>